<name>RNH2_BORAP</name>
<organism>
    <name type="scientific">Borreliella afzelii (strain PKo)</name>
    <name type="common">Borrelia afzelii</name>
    <dbReference type="NCBI Taxonomy" id="390236"/>
    <lineage>
        <taxon>Bacteria</taxon>
        <taxon>Pseudomonadati</taxon>
        <taxon>Spirochaetota</taxon>
        <taxon>Spirochaetia</taxon>
        <taxon>Spirochaetales</taxon>
        <taxon>Borreliaceae</taxon>
        <taxon>Borreliella</taxon>
    </lineage>
</organism>
<protein>
    <recommendedName>
        <fullName evidence="1">Ribonuclease HII</fullName>
        <shortName evidence="1">RNase HII</shortName>
        <ecNumber evidence="1">3.1.26.4</ecNumber>
    </recommendedName>
</protein>
<accession>Q0SPB8</accession>
<accession>G0IQP3</accession>
<dbReference type="EC" id="3.1.26.4" evidence="1"/>
<dbReference type="EMBL" id="CP000395">
    <property type="protein sequence ID" value="ABH01310.1"/>
    <property type="molecule type" value="Genomic_DNA"/>
</dbReference>
<dbReference type="EMBL" id="CP002933">
    <property type="protein sequence ID" value="AEL69279.1"/>
    <property type="molecule type" value="Genomic_DNA"/>
</dbReference>
<dbReference type="RefSeq" id="WP_011600797.1">
    <property type="nucleotide sequence ID" value="NC_008277.1"/>
</dbReference>
<dbReference type="SMR" id="Q0SPB8"/>
<dbReference type="STRING" id="29518.BLA32_04055"/>
<dbReference type="KEGG" id="baf:BAPKO_0046"/>
<dbReference type="KEGG" id="bafz:BafPKo_0045"/>
<dbReference type="PATRIC" id="fig|390236.22.peg.45"/>
<dbReference type="eggNOG" id="COG0164">
    <property type="taxonomic scope" value="Bacteria"/>
</dbReference>
<dbReference type="HOGENOM" id="CLU_036532_3_1_12"/>
<dbReference type="OrthoDB" id="9803420at2"/>
<dbReference type="Proteomes" id="UP000005216">
    <property type="component" value="Chromosome"/>
</dbReference>
<dbReference type="GO" id="GO:0005737">
    <property type="term" value="C:cytoplasm"/>
    <property type="evidence" value="ECO:0007669"/>
    <property type="project" value="UniProtKB-SubCell"/>
</dbReference>
<dbReference type="GO" id="GO:0032299">
    <property type="term" value="C:ribonuclease H2 complex"/>
    <property type="evidence" value="ECO:0007669"/>
    <property type="project" value="TreeGrafter"/>
</dbReference>
<dbReference type="GO" id="GO:0030145">
    <property type="term" value="F:manganese ion binding"/>
    <property type="evidence" value="ECO:0007669"/>
    <property type="project" value="UniProtKB-UniRule"/>
</dbReference>
<dbReference type="GO" id="GO:0003723">
    <property type="term" value="F:RNA binding"/>
    <property type="evidence" value="ECO:0007669"/>
    <property type="project" value="InterPro"/>
</dbReference>
<dbReference type="GO" id="GO:0004523">
    <property type="term" value="F:RNA-DNA hybrid ribonuclease activity"/>
    <property type="evidence" value="ECO:0007669"/>
    <property type="project" value="UniProtKB-UniRule"/>
</dbReference>
<dbReference type="GO" id="GO:0043137">
    <property type="term" value="P:DNA replication, removal of RNA primer"/>
    <property type="evidence" value="ECO:0007669"/>
    <property type="project" value="TreeGrafter"/>
</dbReference>
<dbReference type="GO" id="GO:0006298">
    <property type="term" value="P:mismatch repair"/>
    <property type="evidence" value="ECO:0007669"/>
    <property type="project" value="TreeGrafter"/>
</dbReference>
<dbReference type="CDD" id="cd07182">
    <property type="entry name" value="RNase_HII_bacteria_HII_like"/>
    <property type="match status" value="1"/>
</dbReference>
<dbReference type="Gene3D" id="3.30.420.10">
    <property type="entry name" value="Ribonuclease H-like superfamily/Ribonuclease H"/>
    <property type="match status" value="1"/>
</dbReference>
<dbReference type="HAMAP" id="MF_00052_B">
    <property type="entry name" value="RNase_HII_B"/>
    <property type="match status" value="1"/>
</dbReference>
<dbReference type="InterPro" id="IPR022898">
    <property type="entry name" value="RNase_HII"/>
</dbReference>
<dbReference type="InterPro" id="IPR001352">
    <property type="entry name" value="RNase_HII/HIII"/>
</dbReference>
<dbReference type="InterPro" id="IPR024567">
    <property type="entry name" value="RNase_HII/HIII_dom"/>
</dbReference>
<dbReference type="InterPro" id="IPR012337">
    <property type="entry name" value="RNaseH-like_sf"/>
</dbReference>
<dbReference type="InterPro" id="IPR036397">
    <property type="entry name" value="RNaseH_sf"/>
</dbReference>
<dbReference type="NCBIfam" id="NF000595">
    <property type="entry name" value="PRK00015.1-3"/>
    <property type="match status" value="1"/>
</dbReference>
<dbReference type="PANTHER" id="PTHR10954">
    <property type="entry name" value="RIBONUCLEASE H2 SUBUNIT A"/>
    <property type="match status" value="1"/>
</dbReference>
<dbReference type="PANTHER" id="PTHR10954:SF18">
    <property type="entry name" value="RIBONUCLEASE HII"/>
    <property type="match status" value="1"/>
</dbReference>
<dbReference type="Pfam" id="PF01351">
    <property type="entry name" value="RNase_HII"/>
    <property type="match status" value="1"/>
</dbReference>
<dbReference type="SUPFAM" id="SSF53098">
    <property type="entry name" value="Ribonuclease H-like"/>
    <property type="match status" value="1"/>
</dbReference>
<dbReference type="PROSITE" id="PS51975">
    <property type="entry name" value="RNASE_H_2"/>
    <property type="match status" value="1"/>
</dbReference>
<feature type="chain" id="PRO_1000031119" description="Ribonuclease HII">
    <location>
        <begin position="1"/>
        <end position="181"/>
    </location>
</feature>
<feature type="domain" description="RNase H type-2" evidence="2">
    <location>
        <begin position="1"/>
        <end position="181"/>
    </location>
</feature>
<feature type="binding site" evidence="1">
    <location>
        <position position="6"/>
    </location>
    <ligand>
        <name>a divalent metal cation</name>
        <dbReference type="ChEBI" id="CHEBI:60240"/>
    </ligand>
</feature>
<feature type="binding site" evidence="1">
    <location>
        <position position="7"/>
    </location>
    <ligand>
        <name>a divalent metal cation</name>
        <dbReference type="ChEBI" id="CHEBI:60240"/>
    </ligand>
</feature>
<feature type="binding site" evidence="1">
    <location>
        <position position="98"/>
    </location>
    <ligand>
        <name>a divalent metal cation</name>
        <dbReference type="ChEBI" id="CHEBI:60240"/>
    </ligand>
</feature>
<feature type="sequence conflict" description="In Ref. 2; AEL69279." evidence="3" ref="2">
    <original>G</original>
    <variation>A</variation>
    <location>
        <position position="61"/>
    </location>
</feature>
<evidence type="ECO:0000255" key="1">
    <source>
        <dbReference type="HAMAP-Rule" id="MF_00052"/>
    </source>
</evidence>
<evidence type="ECO:0000255" key="2">
    <source>
        <dbReference type="PROSITE-ProRule" id="PRU01319"/>
    </source>
</evidence>
<evidence type="ECO:0000305" key="3"/>
<sequence>MICGIDEVGRGCIFGPILSAAVVFKKKPNFIKELDDSKKLTKEKREYLSSLILENSYYAFGEISNITIEKINIHNASLLAMQTAYENLKLNCNLVFIDGKFVPKISAKNVKAIIKGDSIIDEIKAASIIAKVKRDKLMDEYDKIYPLYLLKKNKGYPTKEHKNAIKKYGVLSLHRKNFKLI</sequence>
<reference key="1">
    <citation type="journal article" date="2006" name="BMC Genomics">
        <title>Comparative genome analysis: selection pressure on the Borrelia vls cassettes is essential for infectivity.</title>
        <authorList>
            <person name="Gloeckner G."/>
            <person name="Schulte-Spechtel U."/>
            <person name="Schilhabel M."/>
            <person name="Felder M."/>
            <person name="Suehnel J."/>
            <person name="Wilske B."/>
            <person name="Platzer M."/>
        </authorList>
    </citation>
    <scope>NUCLEOTIDE SEQUENCE [LARGE SCALE GENOMIC DNA]</scope>
    <source>
        <strain>PKo</strain>
    </source>
</reference>
<reference key="2">
    <citation type="journal article" date="2011" name="J. Bacteriol.">
        <title>Whole-genome sequences of two Borrelia afzelii and two Borrelia garinii Lyme disease agent isolates.</title>
        <authorList>
            <person name="Casjens S.R."/>
            <person name="Mongodin E.F."/>
            <person name="Qiu W.G."/>
            <person name="Dunn J.J."/>
            <person name="Luft B.J."/>
            <person name="Fraser-Liggett C.M."/>
            <person name="Schutzer S.E."/>
        </authorList>
    </citation>
    <scope>NUCLEOTIDE SEQUENCE [LARGE SCALE GENOMIC DNA]</scope>
    <source>
        <strain>PKo</strain>
    </source>
</reference>
<comment type="function">
    <text evidence="1">Endonuclease that specifically degrades the RNA of RNA-DNA hybrids.</text>
</comment>
<comment type="catalytic activity">
    <reaction evidence="1">
        <text>Endonucleolytic cleavage to 5'-phosphomonoester.</text>
        <dbReference type="EC" id="3.1.26.4"/>
    </reaction>
</comment>
<comment type="cofactor">
    <cofactor evidence="1">
        <name>Mn(2+)</name>
        <dbReference type="ChEBI" id="CHEBI:29035"/>
    </cofactor>
    <cofactor evidence="1">
        <name>Mg(2+)</name>
        <dbReference type="ChEBI" id="CHEBI:18420"/>
    </cofactor>
    <text evidence="1">Manganese or magnesium. Binds 1 divalent metal ion per monomer in the absence of substrate. May bind a second metal ion after substrate binding.</text>
</comment>
<comment type="subcellular location">
    <subcellularLocation>
        <location evidence="1">Cytoplasm</location>
    </subcellularLocation>
</comment>
<comment type="similarity">
    <text evidence="1">Belongs to the RNase HII family.</text>
</comment>
<proteinExistence type="inferred from homology"/>
<gene>
    <name evidence="1" type="primary">rnhB</name>
    <name type="ordered locus">BAPKO_0046</name>
    <name type="ordered locus">BafPKo_0045</name>
</gene>
<keyword id="KW-0963">Cytoplasm</keyword>
<keyword id="KW-0255">Endonuclease</keyword>
<keyword id="KW-0378">Hydrolase</keyword>
<keyword id="KW-0464">Manganese</keyword>
<keyword id="KW-0479">Metal-binding</keyword>
<keyword id="KW-0540">Nuclease</keyword>